<evidence type="ECO:0000255" key="1">
    <source>
        <dbReference type="HAMAP-Rule" id="MF_00023"/>
    </source>
</evidence>
<evidence type="ECO:0000256" key="2">
    <source>
        <dbReference type="SAM" id="MobiDB-lite"/>
    </source>
</evidence>
<keyword id="KW-0963">Cytoplasm</keyword>
<keyword id="KW-1185">Reference proteome</keyword>
<keyword id="KW-0694">RNA-binding</keyword>
<sequence length="154" mass="17674">MSIAENKKAFFNYHIEERFEAGIVLAGWEIKSIRSGQIQLTDGYVVIKDGELFLIGLRINALRSASTHVNPEPDRTKKLLMHKAEIRRLIGKVEQKGHTLVPLNLHYKGGRVKVDVALAKGKAEHDKRHTIKDRDWQREQGRLMRHKVSAPHKD</sequence>
<organism>
    <name type="scientific">Leptothrix cholodnii (strain ATCC 51168 / LMG 8142 / SP-6)</name>
    <name type="common">Leptothrix discophora (strain SP-6)</name>
    <dbReference type="NCBI Taxonomy" id="395495"/>
    <lineage>
        <taxon>Bacteria</taxon>
        <taxon>Pseudomonadati</taxon>
        <taxon>Pseudomonadota</taxon>
        <taxon>Betaproteobacteria</taxon>
        <taxon>Burkholderiales</taxon>
        <taxon>Sphaerotilaceae</taxon>
        <taxon>Leptothrix</taxon>
    </lineage>
</organism>
<comment type="function">
    <text evidence="1">Required for rescue of stalled ribosomes mediated by trans-translation. Binds to transfer-messenger RNA (tmRNA), required for stable association of tmRNA with ribosomes. tmRNA and SmpB together mimic tRNA shape, replacing the anticodon stem-loop with SmpB. tmRNA is encoded by the ssrA gene; the 2 termini fold to resemble tRNA(Ala) and it encodes a 'tag peptide', a short internal open reading frame. During trans-translation Ala-aminoacylated tmRNA acts like a tRNA, entering the A-site of stalled ribosomes, displacing the stalled mRNA. The ribosome then switches to translate the ORF on the tmRNA; the nascent peptide is terminated with the 'tag peptide' encoded by the tmRNA and targeted for degradation. The ribosome is freed to recommence translation, which seems to be the essential function of trans-translation.</text>
</comment>
<comment type="subcellular location">
    <subcellularLocation>
        <location evidence="1">Cytoplasm</location>
    </subcellularLocation>
    <text evidence="1">The tmRNA-SmpB complex associates with stalled 70S ribosomes.</text>
</comment>
<comment type="similarity">
    <text evidence="1">Belongs to the SmpB family.</text>
</comment>
<accession>B1Y225</accession>
<feature type="chain" id="PRO_1000116425" description="SsrA-binding protein">
    <location>
        <begin position="1"/>
        <end position="154"/>
    </location>
</feature>
<feature type="region of interest" description="Disordered" evidence="2">
    <location>
        <begin position="123"/>
        <end position="154"/>
    </location>
</feature>
<feature type="compositionally biased region" description="Basic and acidic residues" evidence="2">
    <location>
        <begin position="123"/>
        <end position="142"/>
    </location>
</feature>
<feature type="compositionally biased region" description="Basic residues" evidence="2">
    <location>
        <begin position="143"/>
        <end position="154"/>
    </location>
</feature>
<reference key="1">
    <citation type="submission" date="2008-03" db="EMBL/GenBank/DDBJ databases">
        <title>Complete sequence of Leptothrix cholodnii SP-6.</title>
        <authorList>
            <consortium name="US DOE Joint Genome Institute"/>
            <person name="Copeland A."/>
            <person name="Lucas S."/>
            <person name="Lapidus A."/>
            <person name="Glavina del Rio T."/>
            <person name="Dalin E."/>
            <person name="Tice H."/>
            <person name="Bruce D."/>
            <person name="Goodwin L."/>
            <person name="Pitluck S."/>
            <person name="Chertkov O."/>
            <person name="Brettin T."/>
            <person name="Detter J.C."/>
            <person name="Han C."/>
            <person name="Kuske C.R."/>
            <person name="Schmutz J."/>
            <person name="Larimer F."/>
            <person name="Land M."/>
            <person name="Hauser L."/>
            <person name="Kyrpides N."/>
            <person name="Lykidis A."/>
            <person name="Emerson D."/>
            <person name="Richardson P."/>
        </authorList>
    </citation>
    <scope>NUCLEOTIDE SEQUENCE [LARGE SCALE GENOMIC DNA]</scope>
    <source>
        <strain>ATCC 51168 / LMG 8142 / SP-6</strain>
    </source>
</reference>
<gene>
    <name evidence="1" type="primary">smpB</name>
    <name type="ordered locus">Lcho_2057</name>
</gene>
<name>SSRP_LEPCP</name>
<protein>
    <recommendedName>
        <fullName evidence="1">SsrA-binding protein</fullName>
    </recommendedName>
    <alternativeName>
        <fullName evidence="1">Small protein B</fullName>
    </alternativeName>
</protein>
<proteinExistence type="inferred from homology"/>
<dbReference type="EMBL" id="CP001013">
    <property type="protein sequence ID" value="ACB34324.1"/>
    <property type="molecule type" value="Genomic_DNA"/>
</dbReference>
<dbReference type="RefSeq" id="WP_012347084.1">
    <property type="nucleotide sequence ID" value="NC_010524.1"/>
</dbReference>
<dbReference type="SMR" id="B1Y225"/>
<dbReference type="STRING" id="395495.Lcho_2057"/>
<dbReference type="KEGG" id="lch:Lcho_2057"/>
<dbReference type="eggNOG" id="COG0691">
    <property type="taxonomic scope" value="Bacteria"/>
</dbReference>
<dbReference type="HOGENOM" id="CLU_108953_3_0_4"/>
<dbReference type="OrthoDB" id="9805462at2"/>
<dbReference type="Proteomes" id="UP000001693">
    <property type="component" value="Chromosome"/>
</dbReference>
<dbReference type="GO" id="GO:0005829">
    <property type="term" value="C:cytosol"/>
    <property type="evidence" value="ECO:0007669"/>
    <property type="project" value="TreeGrafter"/>
</dbReference>
<dbReference type="GO" id="GO:0003723">
    <property type="term" value="F:RNA binding"/>
    <property type="evidence" value="ECO:0007669"/>
    <property type="project" value="UniProtKB-UniRule"/>
</dbReference>
<dbReference type="GO" id="GO:0070929">
    <property type="term" value="P:trans-translation"/>
    <property type="evidence" value="ECO:0007669"/>
    <property type="project" value="UniProtKB-UniRule"/>
</dbReference>
<dbReference type="CDD" id="cd09294">
    <property type="entry name" value="SmpB"/>
    <property type="match status" value="1"/>
</dbReference>
<dbReference type="Gene3D" id="2.40.280.10">
    <property type="match status" value="1"/>
</dbReference>
<dbReference type="HAMAP" id="MF_00023">
    <property type="entry name" value="SmpB"/>
    <property type="match status" value="1"/>
</dbReference>
<dbReference type="InterPro" id="IPR023620">
    <property type="entry name" value="SmpB"/>
</dbReference>
<dbReference type="InterPro" id="IPR000037">
    <property type="entry name" value="SsrA-bd_prot"/>
</dbReference>
<dbReference type="InterPro" id="IPR020081">
    <property type="entry name" value="SsrA-bd_prot_CS"/>
</dbReference>
<dbReference type="NCBIfam" id="NF003843">
    <property type="entry name" value="PRK05422.1"/>
    <property type="match status" value="1"/>
</dbReference>
<dbReference type="NCBIfam" id="TIGR00086">
    <property type="entry name" value="smpB"/>
    <property type="match status" value="1"/>
</dbReference>
<dbReference type="PANTHER" id="PTHR30308:SF2">
    <property type="entry name" value="SSRA-BINDING PROTEIN"/>
    <property type="match status" value="1"/>
</dbReference>
<dbReference type="PANTHER" id="PTHR30308">
    <property type="entry name" value="TMRNA-BINDING COMPONENT OF TRANS-TRANSLATION TAGGING COMPLEX"/>
    <property type="match status" value="1"/>
</dbReference>
<dbReference type="Pfam" id="PF01668">
    <property type="entry name" value="SmpB"/>
    <property type="match status" value="1"/>
</dbReference>
<dbReference type="SUPFAM" id="SSF74982">
    <property type="entry name" value="Small protein B (SmpB)"/>
    <property type="match status" value="1"/>
</dbReference>
<dbReference type="PROSITE" id="PS01317">
    <property type="entry name" value="SSRP"/>
    <property type="match status" value="1"/>
</dbReference>